<evidence type="ECO:0000250" key="1"/>
<evidence type="ECO:0000255" key="2"/>
<evidence type="ECO:0000269" key="3">
    <source>
    </source>
</evidence>
<evidence type="ECO:0000269" key="4">
    <source>
    </source>
</evidence>
<evidence type="ECO:0000269" key="5">
    <source>
    </source>
</evidence>
<evidence type="ECO:0000305" key="6"/>
<proteinExistence type="evidence at protein level"/>
<gene>
    <name type="primary">recJ</name>
    <name type="synonym">yrvE</name>
    <name type="ordered locus">BSU27620</name>
</gene>
<organism>
    <name type="scientific">Bacillus subtilis (strain 168)</name>
    <dbReference type="NCBI Taxonomy" id="224308"/>
    <lineage>
        <taxon>Bacteria</taxon>
        <taxon>Bacillati</taxon>
        <taxon>Bacillota</taxon>
        <taxon>Bacilli</taxon>
        <taxon>Bacillales</taxon>
        <taxon>Bacillaceae</taxon>
        <taxon>Bacillus</taxon>
    </lineage>
</organism>
<keyword id="KW-0175">Coiled coil</keyword>
<keyword id="KW-0963">Cytoplasm</keyword>
<keyword id="KW-0238">DNA-binding</keyword>
<keyword id="KW-0269">Exonuclease</keyword>
<keyword id="KW-0378">Hydrolase</keyword>
<keyword id="KW-0540">Nuclease</keyword>
<keyword id="KW-1185">Reference proteome</keyword>
<feature type="chain" id="PRO_0000360806" description="Single-stranded-DNA-specific exonuclease RecJ">
    <location>
        <begin position="1"/>
        <end position="786"/>
    </location>
</feature>
<feature type="DNA-binding region" description="OB">
    <location>
        <begin position="485"/>
        <end position="563"/>
    </location>
</feature>
<feature type="coiled-coil region" evidence="2">
    <location>
        <begin position="300"/>
        <end position="332"/>
    </location>
</feature>
<sequence length="786" mass="88023">MLASKMRWEIQRPDQDKVKSLTEQLHITPLVASLLVKRGFDTAESARLFLHTKDADFYDPFEMKGMKEAADRIKQAISQQEKIMIYGDYDADGVTSTSVMLHTLQKLSAQVDFYIPDRFKEGYGPNEQAFRSIKERGFSLIITVDTGIAAVHEAKVAKELGLDVIITDHHEPGPELPDVRAIVHPKQPGCTYPFKELAGVGVAFKLAHALLGELPDELLDLAAIGTIADLVPLHDENRLIATLGLERLRRTNRLGLKELIKLSGGDIGEANEETVGFQLAPRLNAVGRIEQADPAVHLLMSEDSFEAEELAAEIDQLNKERQKMVSKMTDEAIEMVEQQGLDQTAIVVAKAGWNPGVVGIVASKLVDRFYRPAIVLGIDEEKGIAKGSARSIRGFNLFESLSECRDILPHFGGHPMAAGMTLKAEDVPDLRSRLNEIADNTLTEEDFIPVQEVDLVCGVEDITVESIAEMNMLSPFGMLNPKPHVLVENAVLEDVRKIGANKTHVKMTIRNESSQLDCVGFNKGELQEGIVPGSRISIVGEMSINEWNNRKKPQLMIKDAAVSEWQLFDLRGKRTWEDTVSALPSAKRAIVSFKEDSTTLLQTEDLRREVHVISSKDQAKAFDLDGAYIVLLDPPPSLDMLARLLEGKAPERIYFIFLNHEDHFLSTFPARDHFKWYYAFLLKRGAFDVKKHGSELAKHKGWSVETINFMTKVFFDLGFVKIENGVLSVVSGAKKRDLTDSQTYQAKQQLMELDQKLNYSSAEELKEWLNKLMKQDSEAYESTRRT</sequence>
<dbReference type="EC" id="3.1.-.-"/>
<dbReference type="EMBL" id="AL009126">
    <property type="protein sequence ID" value="CAB14721.1"/>
    <property type="molecule type" value="Genomic_DNA"/>
</dbReference>
<dbReference type="PIR" id="H69980">
    <property type="entry name" value="H69980"/>
</dbReference>
<dbReference type="RefSeq" id="NP_390640.1">
    <property type="nucleotide sequence ID" value="NC_000964.3"/>
</dbReference>
<dbReference type="RefSeq" id="WP_003246110.1">
    <property type="nucleotide sequence ID" value="NZ_OZ025638.1"/>
</dbReference>
<dbReference type="SMR" id="O32044"/>
<dbReference type="FunCoup" id="O32044">
    <property type="interactions" value="578"/>
</dbReference>
<dbReference type="STRING" id="224308.BSU27620"/>
<dbReference type="PaxDb" id="224308-BSU27620"/>
<dbReference type="DNASU" id="937538"/>
<dbReference type="EnsemblBacteria" id="CAB14721">
    <property type="protein sequence ID" value="CAB14721"/>
    <property type="gene ID" value="BSU_27620"/>
</dbReference>
<dbReference type="GeneID" id="937538"/>
<dbReference type="KEGG" id="bsu:BSU27620"/>
<dbReference type="PATRIC" id="fig|224308.179.peg.3001"/>
<dbReference type="eggNOG" id="COG0608">
    <property type="taxonomic scope" value="Bacteria"/>
</dbReference>
<dbReference type="eggNOG" id="COG4199">
    <property type="taxonomic scope" value="Bacteria"/>
</dbReference>
<dbReference type="InParanoid" id="O32044"/>
<dbReference type="OrthoDB" id="9809852at2"/>
<dbReference type="PhylomeDB" id="O32044"/>
<dbReference type="BioCyc" id="BSUB:BSU27620-MONOMER"/>
<dbReference type="Proteomes" id="UP000001570">
    <property type="component" value="Chromosome"/>
</dbReference>
<dbReference type="GO" id="GO:0005737">
    <property type="term" value="C:cytoplasm"/>
    <property type="evidence" value="ECO:0007669"/>
    <property type="project" value="UniProtKB-KW"/>
</dbReference>
<dbReference type="GO" id="GO:0009295">
    <property type="term" value="C:nucleoid"/>
    <property type="evidence" value="ECO:0007669"/>
    <property type="project" value="UniProtKB-SubCell"/>
</dbReference>
<dbReference type="GO" id="GO:0003677">
    <property type="term" value="F:DNA binding"/>
    <property type="evidence" value="ECO:0007669"/>
    <property type="project" value="UniProtKB-KW"/>
</dbReference>
<dbReference type="GO" id="GO:0045145">
    <property type="term" value="F:single-stranded DNA 5'-3' DNA exonuclease activity"/>
    <property type="evidence" value="ECO:0000318"/>
    <property type="project" value="GO_Central"/>
</dbReference>
<dbReference type="GO" id="GO:0006310">
    <property type="term" value="P:DNA recombination"/>
    <property type="evidence" value="ECO:0000318"/>
    <property type="project" value="GO_Central"/>
</dbReference>
<dbReference type="GO" id="GO:0006281">
    <property type="term" value="P:DNA repair"/>
    <property type="evidence" value="ECO:0007669"/>
    <property type="project" value="InterPro"/>
</dbReference>
<dbReference type="Gene3D" id="3.10.310.30">
    <property type="match status" value="1"/>
</dbReference>
<dbReference type="Gene3D" id="3.90.1640.30">
    <property type="match status" value="1"/>
</dbReference>
<dbReference type="InterPro" id="IPR001667">
    <property type="entry name" value="DDH_dom"/>
</dbReference>
<dbReference type="InterPro" id="IPR038763">
    <property type="entry name" value="DHH_sf"/>
</dbReference>
<dbReference type="InterPro" id="IPR003156">
    <property type="entry name" value="DHHA1_dom"/>
</dbReference>
<dbReference type="InterPro" id="IPR004610">
    <property type="entry name" value="RecJ"/>
</dbReference>
<dbReference type="InterPro" id="IPR018779">
    <property type="entry name" value="RecJ_C"/>
</dbReference>
<dbReference type="InterPro" id="IPR041122">
    <property type="entry name" value="RecJ_OB"/>
</dbReference>
<dbReference type="InterPro" id="IPR051673">
    <property type="entry name" value="SSDNA_exonuclease_RecJ"/>
</dbReference>
<dbReference type="NCBIfam" id="TIGR00644">
    <property type="entry name" value="recJ"/>
    <property type="match status" value="1"/>
</dbReference>
<dbReference type="PANTHER" id="PTHR30255">
    <property type="entry name" value="SINGLE-STRANDED-DNA-SPECIFIC EXONUCLEASE RECJ"/>
    <property type="match status" value="1"/>
</dbReference>
<dbReference type="PANTHER" id="PTHR30255:SF2">
    <property type="entry name" value="SINGLE-STRANDED-DNA-SPECIFIC EXONUCLEASE RECJ"/>
    <property type="match status" value="1"/>
</dbReference>
<dbReference type="Pfam" id="PF01368">
    <property type="entry name" value="DHH"/>
    <property type="match status" value="1"/>
</dbReference>
<dbReference type="Pfam" id="PF02272">
    <property type="entry name" value="DHHA1"/>
    <property type="match status" value="1"/>
</dbReference>
<dbReference type="Pfam" id="PF17768">
    <property type="entry name" value="RecJ_OB"/>
    <property type="match status" value="1"/>
</dbReference>
<dbReference type="Pfam" id="PF10141">
    <property type="entry name" value="ssDNA-exonuc_C"/>
    <property type="match status" value="1"/>
</dbReference>
<dbReference type="SUPFAM" id="SSF64182">
    <property type="entry name" value="DHH phosphoesterases"/>
    <property type="match status" value="1"/>
</dbReference>
<reference key="1">
    <citation type="journal article" date="1997" name="Nature">
        <title>The complete genome sequence of the Gram-positive bacterium Bacillus subtilis.</title>
        <authorList>
            <person name="Kunst F."/>
            <person name="Ogasawara N."/>
            <person name="Moszer I."/>
            <person name="Albertini A.M."/>
            <person name="Alloni G."/>
            <person name="Azevedo V."/>
            <person name="Bertero M.G."/>
            <person name="Bessieres P."/>
            <person name="Bolotin A."/>
            <person name="Borchert S."/>
            <person name="Borriss R."/>
            <person name="Boursier L."/>
            <person name="Brans A."/>
            <person name="Braun M."/>
            <person name="Brignell S.C."/>
            <person name="Bron S."/>
            <person name="Brouillet S."/>
            <person name="Bruschi C.V."/>
            <person name="Caldwell B."/>
            <person name="Capuano V."/>
            <person name="Carter N.M."/>
            <person name="Choi S.-K."/>
            <person name="Codani J.-J."/>
            <person name="Connerton I.F."/>
            <person name="Cummings N.J."/>
            <person name="Daniel R.A."/>
            <person name="Denizot F."/>
            <person name="Devine K.M."/>
            <person name="Duesterhoeft A."/>
            <person name="Ehrlich S.D."/>
            <person name="Emmerson P.T."/>
            <person name="Entian K.-D."/>
            <person name="Errington J."/>
            <person name="Fabret C."/>
            <person name="Ferrari E."/>
            <person name="Foulger D."/>
            <person name="Fritz C."/>
            <person name="Fujita M."/>
            <person name="Fujita Y."/>
            <person name="Fuma S."/>
            <person name="Galizzi A."/>
            <person name="Galleron N."/>
            <person name="Ghim S.-Y."/>
            <person name="Glaser P."/>
            <person name="Goffeau A."/>
            <person name="Golightly E.J."/>
            <person name="Grandi G."/>
            <person name="Guiseppi G."/>
            <person name="Guy B.J."/>
            <person name="Haga K."/>
            <person name="Haiech J."/>
            <person name="Harwood C.R."/>
            <person name="Henaut A."/>
            <person name="Hilbert H."/>
            <person name="Holsappel S."/>
            <person name="Hosono S."/>
            <person name="Hullo M.-F."/>
            <person name="Itaya M."/>
            <person name="Jones L.-M."/>
            <person name="Joris B."/>
            <person name="Karamata D."/>
            <person name="Kasahara Y."/>
            <person name="Klaerr-Blanchard M."/>
            <person name="Klein C."/>
            <person name="Kobayashi Y."/>
            <person name="Koetter P."/>
            <person name="Koningstein G."/>
            <person name="Krogh S."/>
            <person name="Kumano M."/>
            <person name="Kurita K."/>
            <person name="Lapidus A."/>
            <person name="Lardinois S."/>
            <person name="Lauber J."/>
            <person name="Lazarevic V."/>
            <person name="Lee S.-M."/>
            <person name="Levine A."/>
            <person name="Liu H."/>
            <person name="Masuda S."/>
            <person name="Mauel C."/>
            <person name="Medigue C."/>
            <person name="Medina N."/>
            <person name="Mellado R.P."/>
            <person name="Mizuno M."/>
            <person name="Moestl D."/>
            <person name="Nakai S."/>
            <person name="Noback M."/>
            <person name="Noone D."/>
            <person name="O'Reilly M."/>
            <person name="Ogawa K."/>
            <person name="Ogiwara A."/>
            <person name="Oudega B."/>
            <person name="Park S.-H."/>
            <person name="Parro V."/>
            <person name="Pohl T.M."/>
            <person name="Portetelle D."/>
            <person name="Porwollik S."/>
            <person name="Prescott A.M."/>
            <person name="Presecan E."/>
            <person name="Pujic P."/>
            <person name="Purnelle B."/>
            <person name="Rapoport G."/>
            <person name="Rey M."/>
            <person name="Reynolds S."/>
            <person name="Rieger M."/>
            <person name="Rivolta C."/>
            <person name="Rocha E."/>
            <person name="Roche B."/>
            <person name="Rose M."/>
            <person name="Sadaie Y."/>
            <person name="Sato T."/>
            <person name="Scanlan E."/>
            <person name="Schleich S."/>
            <person name="Schroeter R."/>
            <person name="Scoffone F."/>
            <person name="Sekiguchi J."/>
            <person name="Sekowska A."/>
            <person name="Seror S.J."/>
            <person name="Serror P."/>
            <person name="Shin B.-S."/>
            <person name="Soldo B."/>
            <person name="Sorokin A."/>
            <person name="Tacconi E."/>
            <person name="Takagi T."/>
            <person name="Takahashi H."/>
            <person name="Takemaru K."/>
            <person name="Takeuchi M."/>
            <person name="Tamakoshi A."/>
            <person name="Tanaka T."/>
            <person name="Terpstra P."/>
            <person name="Tognoni A."/>
            <person name="Tosato V."/>
            <person name="Uchiyama S."/>
            <person name="Vandenbol M."/>
            <person name="Vannier F."/>
            <person name="Vassarotti A."/>
            <person name="Viari A."/>
            <person name="Wambutt R."/>
            <person name="Wedler E."/>
            <person name="Wedler H."/>
            <person name="Weitzenegger T."/>
            <person name="Winters P."/>
            <person name="Wipat A."/>
            <person name="Yamamoto H."/>
            <person name="Yamane K."/>
            <person name="Yasumoto K."/>
            <person name="Yata K."/>
            <person name="Yoshida K."/>
            <person name="Yoshikawa H.-F."/>
            <person name="Zumstein E."/>
            <person name="Yoshikawa H."/>
            <person name="Danchin A."/>
        </authorList>
    </citation>
    <scope>NUCLEOTIDE SEQUENCE [LARGE SCALE GENOMIC DNA]</scope>
    <source>
        <strain>168</strain>
    </source>
</reference>
<reference key="2">
    <citation type="journal article" date="2005" name="J. Cell Biol.">
        <title>Dynamic formation of RecA filaments at DNA double strand break repair centers in live cells.</title>
        <authorList>
            <person name="Kidane D."/>
            <person name="Graumann P.L."/>
        </authorList>
    </citation>
    <scope>RECRUITS RECA TO DNA DOUBLE-STRAND BREAKS</scope>
    <source>
        <strain>168 / YB886 / BG214</strain>
    </source>
</reference>
<reference key="3">
    <citation type="journal article" date="2006" name="J. Bacteriol.">
        <title>Recruitment of Bacillus subtilis RecN to DNA double-strand breaks in the absence of DNA end processing.</title>
        <authorList>
            <person name="Sanchez H."/>
            <person name="Kidane D."/>
            <person name="Castillo Cozar M."/>
            <person name="Graumann P.L."/>
            <person name="Alonso J.C."/>
        </authorList>
    </citation>
    <scope>DISRUPTION PHENOTYPE</scope>
    <source>
        <strain>168 / YB886 / BG214</strain>
    </source>
</reference>
<reference key="4">
    <citation type="journal article" date="2010" name="PLoS Genet.">
        <title>The C-terminal domain of the bacterial SSB protein acts as a DNA maintenance hub at active chromosome replication forks.</title>
        <authorList>
            <person name="Costes A."/>
            <person name="Lecointe F."/>
            <person name="McGovern S."/>
            <person name="Quevillon-Cheruel S."/>
            <person name="Polard P."/>
        </authorList>
    </citation>
    <scope>INTERACTION WITH SSB</scope>
    <scope>SUBCELLULAR LOCATION</scope>
    <source>
        <strain>168</strain>
    </source>
</reference>
<reference key="5">
    <citation type="journal article" date="2020" name="Front. Mol. Biosci.">
        <title>Bacillus subtilis PcrA Couples DNA Replication, Transcription, Recombination and Segregation.</title>
        <authorList>
            <person name="Moreno-Del Alamo M."/>
            <person name="Torres R."/>
            <person name="Manfredi C."/>
            <person name="Ruiz-Maso J.A."/>
            <person name="Del Solar G."/>
            <person name="Alonso J.C."/>
        </authorList>
    </citation>
    <scope>DISRUPTION PHENOTYPE</scope>
    <source>
        <strain>168 / YB886 / BG214</strain>
    </source>
</reference>
<comment type="function">
    <text evidence="1">Putative single-stranded-DNA-specific exonuclease (By similarity). RecA thread formation during DNA double-strand break repair requires RecJ or AadAB.</text>
</comment>
<comment type="subunit">
    <text evidence="4">Interacts with SSB (sbbA) (PubMed:21170359).</text>
</comment>
<comment type="subcellular location">
    <subcellularLocation>
        <location evidence="4">Cytoplasm</location>
        <location evidence="4">Nucleoid</location>
    </subcellularLocation>
    <text evidence="4">Localizes in tight foci on the nucleoid; targeted to the nucleoid via the 35 C-terminal residues of SSB (ssbA) (PubMed:21170359).</text>
</comment>
<comment type="disruption phenotype">
    <text evidence="3 5">Cells lacking this gene show only slightly increased sensitivity to DNA-damaging agents (PubMed:16385024). However, cells lacking RecJ and with a mutated AadAB enzyme were extremely sensitive to these agents, as sensitive as recA deletion strains (PubMed:16385024). The doubly mutated strain shows 10-fold impaired growth in the absence of these agents (PubMed:16385024). A recJ deletion suppresses the lethality of pcrA DNA helicase depletion and increases survival of the strain in the presence of H(2)O(2) but not methyl methanesulfonate, although the surviving cells are very small (PubMed:32793628).</text>
</comment>
<comment type="similarity">
    <text evidence="6">Belongs to the RecJ family.</text>
</comment>
<accession>O32044</accession>
<name>RECJ_BACSU</name>
<protein>
    <recommendedName>
        <fullName>Single-stranded-DNA-specific exonuclease RecJ</fullName>
        <ecNumber>3.1.-.-</ecNumber>
    </recommendedName>
</protein>